<reference key="1">
    <citation type="submission" date="2008-03" db="EMBL/GenBank/DDBJ databases">
        <title>Complete sequence of plasmid1 of Methylobacterium radiotolerans JCM 2831.</title>
        <authorList>
            <consortium name="US DOE Joint Genome Institute"/>
            <person name="Copeland A."/>
            <person name="Lucas S."/>
            <person name="Lapidus A."/>
            <person name="Glavina del Rio T."/>
            <person name="Dalin E."/>
            <person name="Tice H."/>
            <person name="Bruce D."/>
            <person name="Goodwin L."/>
            <person name="Pitluck S."/>
            <person name="Kiss H."/>
            <person name="Brettin T."/>
            <person name="Detter J.C."/>
            <person name="Han C."/>
            <person name="Kuske C.R."/>
            <person name="Schmutz J."/>
            <person name="Larimer F."/>
            <person name="Land M."/>
            <person name="Hauser L."/>
            <person name="Kyrpides N."/>
            <person name="Mikhailova N."/>
            <person name="Marx C.J."/>
            <person name="Richardson P."/>
        </authorList>
    </citation>
    <scope>NUCLEOTIDE SEQUENCE [LARGE SCALE GENOMIC DNA]</scope>
    <source>
        <strain>ATCC 27329 / DSM 1819 / JCM 2831 / NBRC 15690 / NCIMB 10815 / 0-1</strain>
    </source>
</reference>
<sequence length="208" mass="21823">MTDVTPANAARIGIGGPVGSGKTALIERLIPVLQARGVDLAVITNDLVTKEDAERLRRSGLIDPSRVEAVEAGACPHTVIREDPTLNIAAGDALEARFPGLQLLVFESGGDNLASTFSLDLVDWWIFVIDVAGGDDIPRKRGPGVLRCDLLVINKIDLAPHVGVDLEGMLAEAARVRGGKPVIATNARAGLGIDRVADAIGRAVLFTP</sequence>
<dbReference type="EMBL" id="CP001002">
    <property type="protein sequence ID" value="ACB28112.1"/>
    <property type="molecule type" value="Genomic_DNA"/>
</dbReference>
<dbReference type="SMR" id="B1M9D7"/>
<dbReference type="GeneID" id="6142327"/>
<dbReference type="KEGG" id="mrd:Mrad2831_6188"/>
<dbReference type="eggNOG" id="COG0378">
    <property type="taxonomic scope" value="Bacteria"/>
</dbReference>
<dbReference type="HOGENOM" id="CLU_072144_1_0_5"/>
<dbReference type="OrthoDB" id="9802035at2"/>
<dbReference type="Proteomes" id="UP000006589">
    <property type="component" value="Plasmid pMRAD01"/>
</dbReference>
<dbReference type="GO" id="GO:0005737">
    <property type="term" value="C:cytoplasm"/>
    <property type="evidence" value="ECO:0007669"/>
    <property type="project" value="UniProtKB-SubCell"/>
</dbReference>
<dbReference type="GO" id="GO:0005525">
    <property type="term" value="F:GTP binding"/>
    <property type="evidence" value="ECO:0007669"/>
    <property type="project" value="UniProtKB-KW"/>
</dbReference>
<dbReference type="GO" id="GO:0003924">
    <property type="term" value="F:GTPase activity"/>
    <property type="evidence" value="ECO:0007669"/>
    <property type="project" value="InterPro"/>
</dbReference>
<dbReference type="GO" id="GO:0016151">
    <property type="term" value="F:nickel cation binding"/>
    <property type="evidence" value="ECO:0007669"/>
    <property type="project" value="UniProtKB-UniRule"/>
</dbReference>
<dbReference type="GO" id="GO:0043419">
    <property type="term" value="P:urea catabolic process"/>
    <property type="evidence" value="ECO:0007669"/>
    <property type="project" value="InterPro"/>
</dbReference>
<dbReference type="Gene3D" id="3.40.50.300">
    <property type="entry name" value="P-loop containing nucleotide triphosphate hydrolases"/>
    <property type="match status" value="1"/>
</dbReference>
<dbReference type="HAMAP" id="MF_01389">
    <property type="entry name" value="UreG"/>
    <property type="match status" value="1"/>
</dbReference>
<dbReference type="InterPro" id="IPR003495">
    <property type="entry name" value="CobW/HypB/UreG_nucleotide-bd"/>
</dbReference>
<dbReference type="InterPro" id="IPR027417">
    <property type="entry name" value="P-loop_NTPase"/>
</dbReference>
<dbReference type="InterPro" id="IPR004400">
    <property type="entry name" value="UreG"/>
</dbReference>
<dbReference type="NCBIfam" id="TIGR00101">
    <property type="entry name" value="ureG"/>
    <property type="match status" value="1"/>
</dbReference>
<dbReference type="PANTHER" id="PTHR31715">
    <property type="entry name" value="UREASE ACCESSORY PROTEIN G"/>
    <property type="match status" value="1"/>
</dbReference>
<dbReference type="PANTHER" id="PTHR31715:SF0">
    <property type="entry name" value="UREASE ACCESSORY PROTEIN G"/>
    <property type="match status" value="1"/>
</dbReference>
<dbReference type="Pfam" id="PF02492">
    <property type="entry name" value="cobW"/>
    <property type="match status" value="1"/>
</dbReference>
<dbReference type="PIRSF" id="PIRSF005624">
    <property type="entry name" value="Ni-bind_GTPase"/>
    <property type="match status" value="1"/>
</dbReference>
<dbReference type="SUPFAM" id="SSF52540">
    <property type="entry name" value="P-loop containing nucleoside triphosphate hydrolases"/>
    <property type="match status" value="1"/>
</dbReference>
<organism>
    <name type="scientific">Methylobacterium radiotolerans (strain ATCC 27329 / DSM 1819 / JCM 2831 / NBRC 15690 / NCIMB 10815 / 0-1)</name>
    <dbReference type="NCBI Taxonomy" id="426355"/>
    <lineage>
        <taxon>Bacteria</taxon>
        <taxon>Pseudomonadati</taxon>
        <taxon>Pseudomonadota</taxon>
        <taxon>Alphaproteobacteria</taxon>
        <taxon>Hyphomicrobiales</taxon>
        <taxon>Methylobacteriaceae</taxon>
        <taxon>Methylobacterium</taxon>
    </lineage>
</organism>
<gene>
    <name evidence="1" type="primary">ureG2</name>
    <name type="ordered locus">Mrad2831_6188</name>
</gene>
<accession>B1M9D7</accession>
<geneLocation type="plasmid">
    <name>pMRAD01</name>
</geneLocation>
<feature type="chain" id="PRO_0000347407" description="Urease accessory protein UreG 2">
    <location>
        <begin position="1"/>
        <end position="208"/>
    </location>
</feature>
<feature type="binding site" evidence="1">
    <location>
        <begin position="16"/>
        <end position="23"/>
    </location>
    <ligand>
        <name>GTP</name>
        <dbReference type="ChEBI" id="CHEBI:37565"/>
    </ligand>
</feature>
<evidence type="ECO:0000255" key="1">
    <source>
        <dbReference type="HAMAP-Rule" id="MF_01389"/>
    </source>
</evidence>
<comment type="function">
    <text evidence="1">Facilitates the functional incorporation of the urease nickel metallocenter. This process requires GTP hydrolysis, probably effectuated by UreG.</text>
</comment>
<comment type="subunit">
    <text evidence="1">Homodimer. UreD, UreF and UreG form a complex that acts as a GTP-hydrolysis-dependent molecular chaperone, activating the urease apoprotein by helping to assemble the nickel containing metallocenter of UreC. The UreE protein probably delivers the nickel.</text>
</comment>
<comment type="subcellular location">
    <subcellularLocation>
        <location evidence="1">Cytoplasm</location>
    </subcellularLocation>
</comment>
<comment type="similarity">
    <text evidence="1">Belongs to the SIMIBI class G3E GTPase family. UreG subfamily.</text>
</comment>
<proteinExistence type="inferred from homology"/>
<name>UREG2_METRJ</name>
<keyword id="KW-0143">Chaperone</keyword>
<keyword id="KW-0963">Cytoplasm</keyword>
<keyword id="KW-0342">GTP-binding</keyword>
<keyword id="KW-0996">Nickel insertion</keyword>
<keyword id="KW-0547">Nucleotide-binding</keyword>
<keyword id="KW-0614">Plasmid</keyword>
<protein>
    <recommendedName>
        <fullName evidence="1">Urease accessory protein UreG 2</fullName>
    </recommendedName>
</protein>